<organism>
    <name type="scientific">Felis catus</name>
    <name type="common">Cat</name>
    <name type="synonym">Felis silvestris catus</name>
    <dbReference type="NCBI Taxonomy" id="9685"/>
    <lineage>
        <taxon>Eukaryota</taxon>
        <taxon>Metazoa</taxon>
        <taxon>Chordata</taxon>
        <taxon>Craniata</taxon>
        <taxon>Vertebrata</taxon>
        <taxon>Euteleostomi</taxon>
        <taxon>Mammalia</taxon>
        <taxon>Eutheria</taxon>
        <taxon>Laurasiatheria</taxon>
        <taxon>Carnivora</taxon>
        <taxon>Feliformia</taxon>
        <taxon>Felidae</taxon>
        <taxon>Felinae</taxon>
        <taxon>Felis</taxon>
    </lineage>
</organism>
<comment type="function">
    <text evidence="1">Core subunit of the mitochondrial membrane respiratory chain NADH dehydrogenase (Complex I) which catalyzes electron transfer from NADH through the respiratory chain, using ubiquinone as an electron acceptor. Essential for the catalytic activity of complex I.</text>
</comment>
<comment type="catalytic activity">
    <reaction evidence="1">
        <text>a ubiquinone + NADH + 5 H(+)(in) = a ubiquinol + NAD(+) + 4 H(+)(out)</text>
        <dbReference type="Rhea" id="RHEA:29091"/>
        <dbReference type="Rhea" id="RHEA-COMP:9565"/>
        <dbReference type="Rhea" id="RHEA-COMP:9566"/>
        <dbReference type="ChEBI" id="CHEBI:15378"/>
        <dbReference type="ChEBI" id="CHEBI:16389"/>
        <dbReference type="ChEBI" id="CHEBI:17976"/>
        <dbReference type="ChEBI" id="CHEBI:57540"/>
        <dbReference type="ChEBI" id="CHEBI:57945"/>
        <dbReference type="EC" id="7.1.1.2"/>
    </reaction>
</comment>
<comment type="subunit">
    <text evidence="1">Core subunit of respiratory chain NADH dehydrogenase (Complex I) which is composed of 45 different subunits. Interacts with TMEM186. Interacts with TMEM242 (By similarity).</text>
</comment>
<comment type="subcellular location">
    <subcellularLocation>
        <location evidence="2">Mitochondrion inner membrane</location>
        <topology evidence="3">Multi-pass membrane protein</topology>
    </subcellularLocation>
</comment>
<comment type="similarity">
    <text evidence="4">Belongs to the complex I subunit 3 family.</text>
</comment>
<evidence type="ECO:0000250" key="1">
    <source>
        <dbReference type="UniProtKB" id="P03897"/>
    </source>
</evidence>
<evidence type="ECO:0000250" key="2">
    <source>
        <dbReference type="UniProtKB" id="P03898"/>
    </source>
</evidence>
<evidence type="ECO:0000255" key="3"/>
<evidence type="ECO:0000305" key="4"/>
<evidence type="ECO:0000312" key="5">
    <source>
        <dbReference type="Proteomes" id="UP000011712"/>
    </source>
</evidence>
<sequence>MNVMLALLTNTLLSTLLVLIAFWLPQLNIYAEKASPYECGFDPMGSARLPFSMKFFLVAITFLLFDLEIALLLPLPWASQTDKLPTMLTMALLLISLLAASLAYEWTQKGLEWTE</sequence>
<dbReference type="EC" id="7.1.1.2" evidence="1"/>
<dbReference type="EMBL" id="U20753">
    <property type="protein sequence ID" value="AAC48576.1"/>
    <property type="molecule type" value="Genomic_DNA"/>
</dbReference>
<dbReference type="PIR" id="T11409">
    <property type="entry name" value="T11409"/>
</dbReference>
<dbReference type="RefSeq" id="NP_008258.1">
    <property type="nucleotide sequence ID" value="NC_001700.1"/>
</dbReference>
<dbReference type="SMR" id="P48912"/>
<dbReference type="FunCoup" id="P48912">
    <property type="interactions" value="13"/>
</dbReference>
<dbReference type="STRING" id="9685.ENSFCAP00000025716"/>
<dbReference type="PaxDb" id="9685-ENSFCAP00000025716"/>
<dbReference type="Ensembl" id="ENSFCAT00000032652.1">
    <property type="protein sequence ID" value="ENSFCAP00000025716.1"/>
    <property type="gene ID" value="ENSFCAG00000032067.1"/>
</dbReference>
<dbReference type="GeneID" id="807938"/>
<dbReference type="KEGG" id="fca:807938"/>
<dbReference type="CTD" id="4537"/>
<dbReference type="VGNC" id="VGNC:80935">
    <property type="gene designation" value="MT-ND3"/>
</dbReference>
<dbReference type="eggNOG" id="KOG4662">
    <property type="taxonomic scope" value="Eukaryota"/>
</dbReference>
<dbReference type="GeneTree" id="ENSGT00390000011605"/>
<dbReference type="HOGENOM" id="CLU_119549_3_1_1"/>
<dbReference type="InParanoid" id="P48912"/>
<dbReference type="OMA" id="GPRRYNR"/>
<dbReference type="OrthoDB" id="154075at2759"/>
<dbReference type="Proteomes" id="UP000011712">
    <property type="component" value="Mitochondrion"/>
</dbReference>
<dbReference type="Bgee" id="ENSFCAG00000032067">
    <property type="expression patterns" value="Expressed in spleen and 9 other cell types or tissues"/>
</dbReference>
<dbReference type="GO" id="GO:0005743">
    <property type="term" value="C:mitochondrial inner membrane"/>
    <property type="evidence" value="ECO:0000250"/>
    <property type="project" value="UniProtKB"/>
</dbReference>
<dbReference type="GO" id="GO:0045271">
    <property type="term" value="C:respiratory chain complex I"/>
    <property type="evidence" value="ECO:0000318"/>
    <property type="project" value="GO_Central"/>
</dbReference>
<dbReference type="GO" id="GO:0008137">
    <property type="term" value="F:NADH dehydrogenase (ubiquinone) activity"/>
    <property type="evidence" value="ECO:0000250"/>
    <property type="project" value="UniProtKB"/>
</dbReference>
<dbReference type="GO" id="GO:0006120">
    <property type="term" value="P:mitochondrial electron transport, NADH to ubiquinone"/>
    <property type="evidence" value="ECO:0000250"/>
    <property type="project" value="UniProtKB"/>
</dbReference>
<dbReference type="FunFam" id="1.20.58.1610:FF:000004">
    <property type="entry name" value="NADH-quinone oxidoreductase subunit A"/>
    <property type="match status" value="1"/>
</dbReference>
<dbReference type="Gene3D" id="1.20.58.1610">
    <property type="entry name" value="NADH:ubiquinone/plastoquinone oxidoreductase, chain 3"/>
    <property type="match status" value="1"/>
</dbReference>
<dbReference type="InterPro" id="IPR000440">
    <property type="entry name" value="NADH_UbQ/plastoQ_OxRdtase_su3"/>
</dbReference>
<dbReference type="InterPro" id="IPR038430">
    <property type="entry name" value="NDAH_ubi_oxred_su3_sf"/>
</dbReference>
<dbReference type="PANTHER" id="PTHR11058">
    <property type="entry name" value="NADH-UBIQUINONE OXIDOREDUCTASE CHAIN 3"/>
    <property type="match status" value="1"/>
</dbReference>
<dbReference type="PANTHER" id="PTHR11058:SF9">
    <property type="entry name" value="NADH-UBIQUINONE OXIDOREDUCTASE CHAIN 3"/>
    <property type="match status" value="1"/>
</dbReference>
<dbReference type="Pfam" id="PF00507">
    <property type="entry name" value="Oxidored_q4"/>
    <property type="match status" value="1"/>
</dbReference>
<protein>
    <recommendedName>
        <fullName evidence="1">NADH-ubiquinone oxidoreductase chain 3</fullName>
        <ecNumber evidence="1">7.1.1.2</ecNumber>
    </recommendedName>
    <alternativeName>
        <fullName>NADH dehydrogenase subunit 3</fullName>
    </alternativeName>
</protein>
<proteinExistence type="inferred from homology"/>
<keyword id="KW-0249">Electron transport</keyword>
<keyword id="KW-0472">Membrane</keyword>
<keyword id="KW-0496">Mitochondrion</keyword>
<keyword id="KW-0999">Mitochondrion inner membrane</keyword>
<keyword id="KW-0520">NAD</keyword>
<keyword id="KW-1185">Reference proteome</keyword>
<keyword id="KW-0679">Respiratory chain</keyword>
<keyword id="KW-1278">Translocase</keyword>
<keyword id="KW-0812">Transmembrane</keyword>
<keyword id="KW-1133">Transmembrane helix</keyword>
<keyword id="KW-0813">Transport</keyword>
<keyword id="KW-0830">Ubiquinone</keyword>
<geneLocation type="mitochondrion"/>
<gene>
    <name evidence="1" type="primary">MT-ND3</name>
    <name type="synonym">MTND3</name>
    <name type="synonym">NADH3</name>
    <name type="synonym">ND3</name>
</gene>
<feature type="chain" id="PRO_0000117744" description="NADH-ubiquinone oxidoreductase chain 3">
    <location>
        <begin position="1"/>
        <end position="115"/>
    </location>
</feature>
<feature type="transmembrane region" description="Helical" evidence="3">
    <location>
        <begin position="3"/>
        <end position="23"/>
    </location>
</feature>
<feature type="transmembrane region" description="Helical" evidence="3">
    <location>
        <begin position="55"/>
        <end position="75"/>
    </location>
</feature>
<feature type="transmembrane region" description="Helical" evidence="3">
    <location>
        <begin position="84"/>
        <end position="104"/>
    </location>
</feature>
<reference key="1">
    <citation type="journal article" date="1996" name="Genomics">
        <title>Complete nucleotide sequences of the domestic cat (Felis catus) mitochondrial genome and a transposed mtDNA tandem repeat (Numt) in the nuclear genome.</title>
        <authorList>
            <person name="Lopez J.V."/>
            <person name="Cevario S."/>
            <person name="O'Brien S.J."/>
        </authorList>
    </citation>
    <scope>NUCLEOTIDE SEQUENCE [LARGE SCALE GENOMIC DNA]</scope>
    <source>
        <strain evidence="5">Abyssinian</strain>
        <tissue>Blood</tissue>
    </source>
</reference>
<accession>P48912</accession>
<name>NU3M_FELCA</name>